<keyword id="KW-1217">Cell adhesion impairing toxin</keyword>
<keyword id="KW-0903">Direct protein sequencing</keyword>
<keyword id="KW-1015">Disulfide bond</keyword>
<keyword id="KW-1199">Hemostasis impairing toxin</keyword>
<keyword id="KW-1201">Platelet aggregation inhibiting toxin</keyword>
<keyword id="KW-0964">Secreted</keyword>
<keyword id="KW-0800">Toxin</keyword>
<organism>
    <name type="scientific">Echis ocellatus</name>
    <name type="common">Ocellated saw-scaled viper</name>
    <dbReference type="NCBI Taxonomy" id="99586"/>
    <lineage>
        <taxon>Eukaryota</taxon>
        <taxon>Metazoa</taxon>
        <taxon>Chordata</taxon>
        <taxon>Craniata</taxon>
        <taxon>Vertebrata</taxon>
        <taxon>Euteleostomi</taxon>
        <taxon>Lepidosauria</taxon>
        <taxon>Squamata</taxon>
        <taxon>Bifurcata</taxon>
        <taxon>Unidentata</taxon>
        <taxon>Episquamata</taxon>
        <taxon>Toxicofera</taxon>
        <taxon>Serpentes</taxon>
        <taxon>Colubroidea</taxon>
        <taxon>Viperidae</taxon>
        <taxon>Viperinae</taxon>
        <taxon>Echis</taxon>
    </lineage>
</organism>
<accession>P0C6R6</accession>
<evidence type="ECO:0000250" key="1"/>
<evidence type="ECO:0000255" key="2">
    <source>
        <dbReference type="PROSITE-ProRule" id="PRU00068"/>
    </source>
</evidence>
<evidence type="ECO:0000269" key="3">
    <source>
    </source>
</evidence>
<evidence type="ECO:0000305" key="4"/>
<comment type="function">
    <text evidence="3">Inhibits ADP-induced human platelet aggregation.</text>
</comment>
<comment type="subunit">
    <text evidence="1">Monomer.</text>
</comment>
<comment type="subcellular location">
    <subcellularLocation>
        <location>Secreted</location>
    </subcellularLocation>
</comment>
<comment type="tissue specificity">
    <text>Expressed by the venom gland.</text>
</comment>
<comment type="miscellaneous">
    <text>The disintegrin belongs to the short disintegrin subfamily.</text>
</comment>
<comment type="similarity">
    <text evidence="4">Belongs to the venom metalloproteinase (M12B) family. P-II subfamily. P-IIa sub-subfamily.</text>
</comment>
<reference key="1">
    <citation type="journal article" date="2001" name="J. Biochem.">
        <title>Comparative biochemistry of disintegrins isolated from snake venom: consideration of the taxonomy and geographical distribution of snakes in the genus Echis.</title>
        <authorList>
            <person name="Okuda D."/>
            <person name="Nozaki C."/>
            <person name="Sekiya F."/>
            <person name="Morita T."/>
        </authorList>
    </citation>
    <scope>PROTEIN SEQUENCE</scope>
    <scope>FUNCTION</scope>
    <source>
        <tissue>Venom</tissue>
    </source>
</reference>
<proteinExistence type="evidence at protein level"/>
<protein>
    <recommendedName>
        <fullName>Disintegrin ocellatin</fullName>
    </recommendedName>
</protein>
<dbReference type="SMR" id="P0C6R6"/>
<dbReference type="GO" id="GO:0005576">
    <property type="term" value="C:extracellular region"/>
    <property type="evidence" value="ECO:0007669"/>
    <property type="project" value="UniProtKB-SubCell"/>
</dbReference>
<dbReference type="GO" id="GO:0090729">
    <property type="term" value="F:toxin activity"/>
    <property type="evidence" value="ECO:0007669"/>
    <property type="project" value="UniProtKB-KW"/>
</dbReference>
<dbReference type="Gene3D" id="4.10.70.10">
    <property type="entry name" value="Disintegrin domain"/>
    <property type="match status" value="1"/>
</dbReference>
<dbReference type="InterPro" id="IPR018358">
    <property type="entry name" value="Disintegrin_CS"/>
</dbReference>
<dbReference type="InterPro" id="IPR001762">
    <property type="entry name" value="Disintegrin_dom"/>
</dbReference>
<dbReference type="InterPro" id="IPR036436">
    <property type="entry name" value="Disintegrin_dom_sf"/>
</dbReference>
<dbReference type="PRINTS" id="PR00289">
    <property type="entry name" value="DISINTEGRIN"/>
</dbReference>
<dbReference type="SMART" id="SM00050">
    <property type="entry name" value="DISIN"/>
    <property type="match status" value="1"/>
</dbReference>
<dbReference type="SUPFAM" id="SSF57552">
    <property type="entry name" value="Blood coagulation inhibitor (disintegrin)"/>
    <property type="match status" value="1"/>
</dbReference>
<dbReference type="PROSITE" id="PS00427">
    <property type="entry name" value="DISINTEGRIN_1"/>
    <property type="match status" value="1"/>
</dbReference>
<dbReference type="PROSITE" id="PS50214">
    <property type="entry name" value="DISINTEGRIN_2"/>
    <property type="match status" value="1"/>
</dbReference>
<feature type="chain" id="PRO_0000326266" description="Disintegrin ocellatin">
    <location>
        <begin position="1"/>
        <end position="49"/>
    </location>
</feature>
<feature type="domain" description="Disintegrin" evidence="2">
    <location>
        <begin position="1"/>
        <end position="47"/>
    </location>
</feature>
<feature type="short sequence motif" description="Cell attachment site">
    <location>
        <begin position="24"/>
        <end position="26"/>
    </location>
</feature>
<feature type="disulfide bond" evidence="2">
    <location>
        <begin position="2"/>
        <end position="11"/>
    </location>
</feature>
<feature type="disulfide bond" evidence="2">
    <location>
        <begin position="7"/>
        <end position="32"/>
    </location>
</feature>
<feature type="disulfide bond" evidence="2">
    <location>
        <begin position="8"/>
        <end position="37"/>
    </location>
</feature>
<feature type="disulfide bond" evidence="2">
    <location>
        <begin position="20"/>
        <end position="39"/>
    </location>
</feature>
<sequence>DCESGPCCDNCKFLKEGTICKMARGDNMHHYCNGKTCDCPRNPYKGEHD</sequence>
<name>VM2OI_ECHOC</name>